<name>ADD_ECO45</name>
<gene>
    <name evidence="1" type="primary">add</name>
    <name type="ordered locus">ECS88_1670</name>
</gene>
<reference key="1">
    <citation type="journal article" date="2009" name="PLoS Genet.">
        <title>Organised genome dynamics in the Escherichia coli species results in highly diverse adaptive paths.</title>
        <authorList>
            <person name="Touchon M."/>
            <person name="Hoede C."/>
            <person name="Tenaillon O."/>
            <person name="Barbe V."/>
            <person name="Baeriswyl S."/>
            <person name="Bidet P."/>
            <person name="Bingen E."/>
            <person name="Bonacorsi S."/>
            <person name="Bouchier C."/>
            <person name="Bouvet O."/>
            <person name="Calteau A."/>
            <person name="Chiapello H."/>
            <person name="Clermont O."/>
            <person name="Cruveiller S."/>
            <person name="Danchin A."/>
            <person name="Diard M."/>
            <person name="Dossat C."/>
            <person name="Karoui M.E."/>
            <person name="Frapy E."/>
            <person name="Garry L."/>
            <person name="Ghigo J.M."/>
            <person name="Gilles A.M."/>
            <person name="Johnson J."/>
            <person name="Le Bouguenec C."/>
            <person name="Lescat M."/>
            <person name="Mangenot S."/>
            <person name="Martinez-Jehanne V."/>
            <person name="Matic I."/>
            <person name="Nassif X."/>
            <person name="Oztas S."/>
            <person name="Petit M.A."/>
            <person name="Pichon C."/>
            <person name="Rouy Z."/>
            <person name="Ruf C.S."/>
            <person name="Schneider D."/>
            <person name="Tourret J."/>
            <person name="Vacherie B."/>
            <person name="Vallenet D."/>
            <person name="Medigue C."/>
            <person name="Rocha E.P.C."/>
            <person name="Denamur E."/>
        </authorList>
    </citation>
    <scope>NUCLEOTIDE SEQUENCE [LARGE SCALE GENOMIC DNA]</scope>
    <source>
        <strain>S88 / ExPEC</strain>
    </source>
</reference>
<sequence length="333" mass="36360">MIDTTLPLTDIHRHLDGNIRPQTILELGRQYNISLPAQSLETLIPHVQVIANEPDLVSFLTKLDWGVKVLASLDACRRVAFENIEDAARNGLHYVELRFSPGYMAMAHQLPVAGVVEAVIDGVREGCRTFGVQAKLIGIMSRTFGEAACQQELEAFLAHRDQITALDLAGDELGFPGSLFLSHFNRARDAGWHITVHAGEAAGPESIWQAIRELGAERIGHGVKAIEDRALMDFLAEQQIGIESCLTSNIQTSTVADLAAHPLKTFLEHGIRASINTDDPGVQGVDIIHEYTVAAPAAGLSREQIRQAQINGLEMAFLSAEEKRALREKVAAK</sequence>
<protein>
    <recommendedName>
        <fullName evidence="1">Adenosine deaminase</fullName>
        <ecNumber evidence="1">3.5.4.4</ecNumber>
    </recommendedName>
    <alternativeName>
        <fullName evidence="1">Adenosine aminohydrolase</fullName>
    </alternativeName>
</protein>
<proteinExistence type="inferred from homology"/>
<accession>B7M9X6</accession>
<evidence type="ECO:0000255" key="1">
    <source>
        <dbReference type="HAMAP-Rule" id="MF_00540"/>
    </source>
</evidence>
<keyword id="KW-0378">Hydrolase</keyword>
<keyword id="KW-0479">Metal-binding</keyword>
<keyword id="KW-0546">Nucleotide metabolism</keyword>
<keyword id="KW-1185">Reference proteome</keyword>
<keyword id="KW-0862">Zinc</keyword>
<feature type="chain" id="PRO_1000128839" description="Adenosine deaminase">
    <location>
        <begin position="1"/>
        <end position="333"/>
    </location>
</feature>
<feature type="active site" description="Proton donor" evidence="1">
    <location>
        <position position="200"/>
    </location>
</feature>
<feature type="binding site" evidence="1">
    <location>
        <position position="12"/>
    </location>
    <ligand>
        <name>Zn(2+)</name>
        <dbReference type="ChEBI" id="CHEBI:29105"/>
        <note>catalytic</note>
    </ligand>
</feature>
<feature type="binding site" evidence="1">
    <location>
        <position position="14"/>
    </location>
    <ligand>
        <name>substrate</name>
    </ligand>
</feature>
<feature type="binding site" evidence="1">
    <location>
        <position position="14"/>
    </location>
    <ligand>
        <name>Zn(2+)</name>
        <dbReference type="ChEBI" id="CHEBI:29105"/>
        <note>catalytic</note>
    </ligand>
</feature>
<feature type="binding site" evidence="1">
    <location>
        <position position="16"/>
    </location>
    <ligand>
        <name>substrate</name>
    </ligand>
</feature>
<feature type="binding site" evidence="1">
    <location>
        <position position="170"/>
    </location>
    <ligand>
        <name>substrate</name>
    </ligand>
</feature>
<feature type="binding site" evidence="1">
    <location>
        <position position="197"/>
    </location>
    <ligand>
        <name>Zn(2+)</name>
        <dbReference type="ChEBI" id="CHEBI:29105"/>
        <note>catalytic</note>
    </ligand>
</feature>
<feature type="binding site" evidence="1">
    <location>
        <position position="278"/>
    </location>
    <ligand>
        <name>Zn(2+)</name>
        <dbReference type="ChEBI" id="CHEBI:29105"/>
        <note>catalytic</note>
    </ligand>
</feature>
<feature type="binding site" evidence="1">
    <location>
        <position position="279"/>
    </location>
    <ligand>
        <name>substrate</name>
    </ligand>
</feature>
<feature type="site" description="Important for catalytic activity" evidence="1">
    <location>
        <position position="221"/>
    </location>
</feature>
<comment type="function">
    <text evidence="1">Catalyzes the hydrolytic deamination of adenosine and 2-deoxyadenosine.</text>
</comment>
<comment type="catalytic activity">
    <reaction evidence="1">
        <text>adenosine + H2O + H(+) = inosine + NH4(+)</text>
        <dbReference type="Rhea" id="RHEA:24408"/>
        <dbReference type="ChEBI" id="CHEBI:15377"/>
        <dbReference type="ChEBI" id="CHEBI:15378"/>
        <dbReference type="ChEBI" id="CHEBI:16335"/>
        <dbReference type="ChEBI" id="CHEBI:17596"/>
        <dbReference type="ChEBI" id="CHEBI:28938"/>
        <dbReference type="EC" id="3.5.4.4"/>
    </reaction>
    <physiologicalReaction direction="left-to-right" evidence="1">
        <dbReference type="Rhea" id="RHEA:24409"/>
    </physiologicalReaction>
</comment>
<comment type="catalytic activity">
    <reaction evidence="1">
        <text>2'-deoxyadenosine + H2O + H(+) = 2'-deoxyinosine + NH4(+)</text>
        <dbReference type="Rhea" id="RHEA:28190"/>
        <dbReference type="ChEBI" id="CHEBI:15377"/>
        <dbReference type="ChEBI" id="CHEBI:15378"/>
        <dbReference type="ChEBI" id="CHEBI:17256"/>
        <dbReference type="ChEBI" id="CHEBI:28938"/>
        <dbReference type="ChEBI" id="CHEBI:28997"/>
        <dbReference type="EC" id="3.5.4.4"/>
    </reaction>
    <physiologicalReaction direction="left-to-right" evidence="1">
        <dbReference type="Rhea" id="RHEA:28191"/>
    </physiologicalReaction>
</comment>
<comment type="cofactor">
    <cofactor evidence="1">
        <name>Zn(2+)</name>
        <dbReference type="ChEBI" id="CHEBI:29105"/>
    </cofactor>
    <text evidence="1">Binds 1 zinc ion per subunit.</text>
</comment>
<comment type="similarity">
    <text evidence="1">Belongs to the metallo-dependent hydrolases superfamily. Adenosine and AMP deaminases family. Adenosine deaminase subfamily.</text>
</comment>
<organism>
    <name type="scientific">Escherichia coli O45:K1 (strain S88 / ExPEC)</name>
    <dbReference type="NCBI Taxonomy" id="585035"/>
    <lineage>
        <taxon>Bacteria</taxon>
        <taxon>Pseudomonadati</taxon>
        <taxon>Pseudomonadota</taxon>
        <taxon>Gammaproteobacteria</taxon>
        <taxon>Enterobacterales</taxon>
        <taxon>Enterobacteriaceae</taxon>
        <taxon>Escherichia</taxon>
    </lineage>
</organism>
<dbReference type="EC" id="3.5.4.4" evidence="1"/>
<dbReference type="EMBL" id="CU928161">
    <property type="protein sequence ID" value="CAR02983.1"/>
    <property type="molecule type" value="Genomic_DNA"/>
</dbReference>
<dbReference type="RefSeq" id="WP_000567511.1">
    <property type="nucleotide sequence ID" value="NC_011742.1"/>
</dbReference>
<dbReference type="SMR" id="B7M9X6"/>
<dbReference type="KEGG" id="ecz:ECS88_1670"/>
<dbReference type="HOGENOM" id="CLU_039228_0_2_6"/>
<dbReference type="Proteomes" id="UP000000747">
    <property type="component" value="Chromosome"/>
</dbReference>
<dbReference type="GO" id="GO:0005829">
    <property type="term" value="C:cytosol"/>
    <property type="evidence" value="ECO:0007669"/>
    <property type="project" value="TreeGrafter"/>
</dbReference>
<dbReference type="GO" id="GO:0046936">
    <property type="term" value="F:2'-deoxyadenosine deaminase activity"/>
    <property type="evidence" value="ECO:0007669"/>
    <property type="project" value="RHEA"/>
</dbReference>
<dbReference type="GO" id="GO:0004000">
    <property type="term" value="F:adenosine deaminase activity"/>
    <property type="evidence" value="ECO:0007669"/>
    <property type="project" value="UniProtKB-UniRule"/>
</dbReference>
<dbReference type="GO" id="GO:0008270">
    <property type="term" value="F:zinc ion binding"/>
    <property type="evidence" value="ECO:0007669"/>
    <property type="project" value="UniProtKB-UniRule"/>
</dbReference>
<dbReference type="GO" id="GO:0006154">
    <property type="term" value="P:adenosine catabolic process"/>
    <property type="evidence" value="ECO:0007669"/>
    <property type="project" value="TreeGrafter"/>
</dbReference>
<dbReference type="GO" id="GO:0043103">
    <property type="term" value="P:hypoxanthine salvage"/>
    <property type="evidence" value="ECO:0007669"/>
    <property type="project" value="TreeGrafter"/>
</dbReference>
<dbReference type="GO" id="GO:0046103">
    <property type="term" value="P:inosine biosynthetic process"/>
    <property type="evidence" value="ECO:0007669"/>
    <property type="project" value="TreeGrafter"/>
</dbReference>
<dbReference type="GO" id="GO:0009117">
    <property type="term" value="P:nucleotide metabolic process"/>
    <property type="evidence" value="ECO:0007669"/>
    <property type="project" value="UniProtKB-KW"/>
</dbReference>
<dbReference type="GO" id="GO:0009168">
    <property type="term" value="P:purine ribonucleoside monophosphate biosynthetic process"/>
    <property type="evidence" value="ECO:0007669"/>
    <property type="project" value="UniProtKB-UniRule"/>
</dbReference>
<dbReference type="CDD" id="cd01320">
    <property type="entry name" value="ADA"/>
    <property type="match status" value="1"/>
</dbReference>
<dbReference type="FunFam" id="3.20.20.140:FF:000009">
    <property type="entry name" value="Adenosine deaminase"/>
    <property type="match status" value="1"/>
</dbReference>
<dbReference type="Gene3D" id="3.20.20.140">
    <property type="entry name" value="Metal-dependent hydrolases"/>
    <property type="match status" value="1"/>
</dbReference>
<dbReference type="HAMAP" id="MF_00540">
    <property type="entry name" value="A_deaminase"/>
    <property type="match status" value="1"/>
</dbReference>
<dbReference type="InterPro" id="IPR006650">
    <property type="entry name" value="A/AMP_deam_AS"/>
</dbReference>
<dbReference type="InterPro" id="IPR028893">
    <property type="entry name" value="A_deaminase"/>
</dbReference>
<dbReference type="InterPro" id="IPR001365">
    <property type="entry name" value="A_deaminase_dom"/>
</dbReference>
<dbReference type="InterPro" id="IPR006330">
    <property type="entry name" value="Ado/ade_deaminase"/>
</dbReference>
<dbReference type="InterPro" id="IPR032466">
    <property type="entry name" value="Metal_Hydrolase"/>
</dbReference>
<dbReference type="NCBIfam" id="TIGR01430">
    <property type="entry name" value="aden_deam"/>
    <property type="match status" value="1"/>
</dbReference>
<dbReference type="NCBIfam" id="NF006846">
    <property type="entry name" value="PRK09358.1-1"/>
    <property type="match status" value="1"/>
</dbReference>
<dbReference type="PANTHER" id="PTHR11409">
    <property type="entry name" value="ADENOSINE DEAMINASE"/>
    <property type="match status" value="1"/>
</dbReference>
<dbReference type="PANTHER" id="PTHR11409:SF43">
    <property type="entry name" value="ADENOSINE DEAMINASE"/>
    <property type="match status" value="1"/>
</dbReference>
<dbReference type="Pfam" id="PF00962">
    <property type="entry name" value="A_deaminase"/>
    <property type="match status" value="1"/>
</dbReference>
<dbReference type="SUPFAM" id="SSF51556">
    <property type="entry name" value="Metallo-dependent hydrolases"/>
    <property type="match status" value="1"/>
</dbReference>
<dbReference type="PROSITE" id="PS00485">
    <property type="entry name" value="A_DEAMINASE"/>
    <property type="match status" value="1"/>
</dbReference>